<proteinExistence type="inferred from homology"/>
<feature type="chain" id="PRO_1000051536" description="Global transcriptional regulator CodY">
    <location>
        <begin position="1"/>
        <end position="258"/>
    </location>
</feature>
<feature type="DNA-binding region" description="H-T-H motif" evidence="1">
    <location>
        <begin position="204"/>
        <end position="223"/>
    </location>
</feature>
<feature type="region of interest" description="GAF domain" evidence="1">
    <location>
        <begin position="1"/>
        <end position="156"/>
    </location>
</feature>
<sequence>MSTLLSKTRRLNKILQKSGTEAIAFGDICQLLSDVMSCNVYLVGRKGRILGYSFSEKFECDIMKEKVVVDRKFPEDYNNKLINIQDTIANIPNKGICVFEGVGECLISKKISTIVPIVGNGDRLGTLLLARFGEEFNDDDLVLAEYSATIVGMELLRARQGEIEEEARKKAVVQLAIGTLSYSELEAVEHIFSELNGDEGLLVASKIADKVGITRSVIVNALRKFESAGVIESRSLGMKGTHIKILNEKLMDELKKIK</sequence>
<keyword id="KW-0963">Cytoplasm</keyword>
<keyword id="KW-0238">DNA-binding</keyword>
<keyword id="KW-0678">Repressor</keyword>
<keyword id="KW-0804">Transcription</keyword>
<keyword id="KW-0805">Transcription regulation</keyword>
<comment type="function">
    <text evidence="1">DNA-binding global transcriptional regulator which is involved in the adaptive response to starvation and acts by directly or indirectly controlling the expression of numerous genes in response to nutrient availability. During rapid exponential growth, CodY is highly active and represses genes whose products allow adaptation to nutrient depletion.</text>
</comment>
<comment type="subcellular location">
    <subcellularLocation>
        <location evidence="1">Cytoplasm</location>
    </subcellularLocation>
</comment>
<comment type="similarity">
    <text evidence="1">Belongs to the CodY family.</text>
</comment>
<dbReference type="EMBL" id="CP000312">
    <property type="protein sequence ID" value="ABG85602.1"/>
    <property type="molecule type" value="Genomic_DNA"/>
</dbReference>
<dbReference type="RefSeq" id="WP_003449426.1">
    <property type="nucleotide sequence ID" value="NZ_CAXVKH010000001.1"/>
</dbReference>
<dbReference type="SMR" id="Q0SSB9"/>
<dbReference type="GeneID" id="93001761"/>
<dbReference type="KEGG" id="cpr:CPR_1673"/>
<dbReference type="Proteomes" id="UP000001824">
    <property type="component" value="Chromosome"/>
</dbReference>
<dbReference type="GO" id="GO:0005737">
    <property type="term" value="C:cytoplasm"/>
    <property type="evidence" value="ECO:0007669"/>
    <property type="project" value="UniProtKB-SubCell"/>
</dbReference>
<dbReference type="GO" id="GO:0003677">
    <property type="term" value="F:DNA binding"/>
    <property type="evidence" value="ECO:0007669"/>
    <property type="project" value="UniProtKB-UniRule"/>
</dbReference>
<dbReference type="GO" id="GO:0003700">
    <property type="term" value="F:DNA-binding transcription factor activity"/>
    <property type="evidence" value="ECO:0007669"/>
    <property type="project" value="InterPro"/>
</dbReference>
<dbReference type="GO" id="GO:0005525">
    <property type="term" value="F:GTP binding"/>
    <property type="evidence" value="ECO:0007669"/>
    <property type="project" value="InterPro"/>
</dbReference>
<dbReference type="GO" id="GO:0045892">
    <property type="term" value="P:negative regulation of DNA-templated transcription"/>
    <property type="evidence" value="ECO:0007669"/>
    <property type="project" value="UniProtKB-UniRule"/>
</dbReference>
<dbReference type="GO" id="GO:0043945">
    <property type="term" value="P:positive regulation of asexual sporulation resulting in formation of a cellular spore"/>
    <property type="evidence" value="ECO:0000315"/>
    <property type="project" value="CACAO"/>
</dbReference>
<dbReference type="FunFam" id="1.10.10.10:FF:000034">
    <property type="entry name" value="GTP-sensing transcriptional pleiotropic repressor CodY"/>
    <property type="match status" value="1"/>
</dbReference>
<dbReference type="Gene3D" id="3.30.450.40">
    <property type="match status" value="1"/>
</dbReference>
<dbReference type="Gene3D" id="1.10.10.10">
    <property type="entry name" value="Winged helix-like DNA-binding domain superfamily/Winged helix DNA-binding domain"/>
    <property type="match status" value="1"/>
</dbReference>
<dbReference type="HAMAP" id="MF_00621">
    <property type="entry name" value="HTH_type_CodY"/>
    <property type="match status" value="1"/>
</dbReference>
<dbReference type="InterPro" id="IPR014154">
    <property type="entry name" value="CodY"/>
</dbReference>
<dbReference type="InterPro" id="IPR029016">
    <property type="entry name" value="GAF-like_dom_sf"/>
</dbReference>
<dbReference type="InterPro" id="IPR013198">
    <property type="entry name" value="GTP_trans_reg_CodY_C"/>
</dbReference>
<dbReference type="InterPro" id="IPR010312">
    <property type="entry name" value="Transc_reg_CodY_N"/>
</dbReference>
<dbReference type="InterPro" id="IPR036388">
    <property type="entry name" value="WH-like_DNA-bd_sf"/>
</dbReference>
<dbReference type="InterPro" id="IPR036390">
    <property type="entry name" value="WH_DNA-bd_sf"/>
</dbReference>
<dbReference type="NCBIfam" id="TIGR02787">
    <property type="entry name" value="codY_Gpos"/>
    <property type="match status" value="1"/>
</dbReference>
<dbReference type="NCBIfam" id="NF003170">
    <property type="entry name" value="PRK04158.1"/>
    <property type="match status" value="1"/>
</dbReference>
<dbReference type="PANTHER" id="PTHR40062:SF1">
    <property type="entry name" value="GLOBAL TRANSCRIPTIONAL REGULATOR CODY"/>
    <property type="match status" value="1"/>
</dbReference>
<dbReference type="PANTHER" id="PTHR40062">
    <property type="entry name" value="GTP-SENSING TRANSCRIPTIONAL PLEIOTROPIC REPRESSOR CODY"/>
    <property type="match status" value="1"/>
</dbReference>
<dbReference type="Pfam" id="PF06018">
    <property type="entry name" value="CodY"/>
    <property type="match status" value="1"/>
</dbReference>
<dbReference type="Pfam" id="PF08222">
    <property type="entry name" value="HTH_CodY"/>
    <property type="match status" value="1"/>
</dbReference>
<dbReference type="PIRSF" id="PIRSF011572">
    <property type="entry name" value="GTP_sensing_CodY"/>
    <property type="match status" value="1"/>
</dbReference>
<dbReference type="SUPFAM" id="SSF46785">
    <property type="entry name" value="Winged helix' DNA-binding domain"/>
    <property type="match status" value="1"/>
</dbReference>
<reference key="1">
    <citation type="journal article" date="2006" name="Genome Res.">
        <title>Skewed genomic variability in strains of the toxigenic bacterial pathogen, Clostridium perfringens.</title>
        <authorList>
            <person name="Myers G.S.A."/>
            <person name="Rasko D.A."/>
            <person name="Cheung J.K."/>
            <person name="Ravel J."/>
            <person name="Seshadri R."/>
            <person name="DeBoy R.T."/>
            <person name="Ren Q."/>
            <person name="Varga J."/>
            <person name="Awad M.M."/>
            <person name="Brinkac L.M."/>
            <person name="Daugherty S.C."/>
            <person name="Haft D.H."/>
            <person name="Dodson R.J."/>
            <person name="Madupu R."/>
            <person name="Nelson W.C."/>
            <person name="Rosovitz M.J."/>
            <person name="Sullivan S.A."/>
            <person name="Khouri H."/>
            <person name="Dimitrov G.I."/>
            <person name="Watkins K.L."/>
            <person name="Mulligan S."/>
            <person name="Benton J."/>
            <person name="Radune D."/>
            <person name="Fisher D.J."/>
            <person name="Atkins H.S."/>
            <person name="Hiscox T."/>
            <person name="Jost B.H."/>
            <person name="Billington S.J."/>
            <person name="Songer J.G."/>
            <person name="McClane B.A."/>
            <person name="Titball R.W."/>
            <person name="Rood J.I."/>
            <person name="Melville S.B."/>
            <person name="Paulsen I.T."/>
        </authorList>
    </citation>
    <scope>NUCLEOTIDE SEQUENCE [LARGE SCALE GENOMIC DNA]</scope>
    <source>
        <strain>SM101 / Type A</strain>
    </source>
</reference>
<organism>
    <name type="scientific">Clostridium perfringens (strain SM101 / Type A)</name>
    <dbReference type="NCBI Taxonomy" id="289380"/>
    <lineage>
        <taxon>Bacteria</taxon>
        <taxon>Bacillati</taxon>
        <taxon>Bacillota</taxon>
        <taxon>Clostridia</taxon>
        <taxon>Eubacteriales</taxon>
        <taxon>Clostridiaceae</taxon>
        <taxon>Clostridium</taxon>
    </lineage>
</organism>
<protein>
    <recommendedName>
        <fullName evidence="1">Global transcriptional regulator CodY</fullName>
    </recommendedName>
</protein>
<accession>Q0SSB9</accession>
<evidence type="ECO:0000255" key="1">
    <source>
        <dbReference type="HAMAP-Rule" id="MF_00621"/>
    </source>
</evidence>
<gene>
    <name evidence="1" type="primary">codY</name>
    <name type="ordered locus">CPR_1673</name>
</gene>
<name>CODY_CLOPS</name>